<accession>Q94WX5</accession>
<feature type="chain" id="PRO_0000060839" description="Cytochrome b">
    <location>
        <begin position="1"/>
        <end position="379"/>
    </location>
</feature>
<feature type="transmembrane region" description="Helical" evidence="2">
    <location>
        <begin position="33"/>
        <end position="53"/>
    </location>
</feature>
<feature type="transmembrane region" description="Helical" evidence="2">
    <location>
        <begin position="77"/>
        <end position="98"/>
    </location>
</feature>
<feature type="transmembrane region" description="Helical" evidence="2">
    <location>
        <begin position="113"/>
        <end position="133"/>
    </location>
</feature>
<feature type="transmembrane region" description="Helical" evidence="2">
    <location>
        <begin position="178"/>
        <end position="198"/>
    </location>
</feature>
<feature type="transmembrane region" description="Helical" evidence="2">
    <location>
        <begin position="226"/>
        <end position="246"/>
    </location>
</feature>
<feature type="transmembrane region" description="Helical" evidence="2">
    <location>
        <begin position="288"/>
        <end position="308"/>
    </location>
</feature>
<feature type="transmembrane region" description="Helical" evidence="2">
    <location>
        <begin position="320"/>
        <end position="340"/>
    </location>
</feature>
<feature type="transmembrane region" description="Helical" evidence="2">
    <location>
        <begin position="347"/>
        <end position="367"/>
    </location>
</feature>
<feature type="binding site" description="axial binding residue" evidence="2">
    <location>
        <position position="83"/>
    </location>
    <ligand>
        <name>heme b</name>
        <dbReference type="ChEBI" id="CHEBI:60344"/>
        <label>b562</label>
    </ligand>
    <ligandPart>
        <name>Fe</name>
        <dbReference type="ChEBI" id="CHEBI:18248"/>
    </ligandPart>
</feature>
<feature type="binding site" description="axial binding residue" evidence="2">
    <location>
        <position position="97"/>
    </location>
    <ligand>
        <name>heme b</name>
        <dbReference type="ChEBI" id="CHEBI:60344"/>
        <label>b566</label>
    </ligand>
    <ligandPart>
        <name>Fe</name>
        <dbReference type="ChEBI" id="CHEBI:18248"/>
    </ligandPart>
</feature>
<feature type="binding site" description="axial binding residue" evidence="2">
    <location>
        <position position="182"/>
    </location>
    <ligand>
        <name>heme b</name>
        <dbReference type="ChEBI" id="CHEBI:60344"/>
        <label>b562</label>
    </ligand>
    <ligandPart>
        <name>Fe</name>
        <dbReference type="ChEBI" id="CHEBI:18248"/>
    </ligandPart>
</feature>
<feature type="binding site" description="axial binding residue" evidence="2">
    <location>
        <position position="196"/>
    </location>
    <ligand>
        <name>heme b</name>
        <dbReference type="ChEBI" id="CHEBI:60344"/>
        <label>b566</label>
    </ligand>
    <ligandPart>
        <name>Fe</name>
        <dbReference type="ChEBI" id="CHEBI:18248"/>
    </ligandPart>
</feature>
<feature type="binding site" evidence="2">
    <location>
        <position position="201"/>
    </location>
    <ligand>
        <name>a ubiquinone</name>
        <dbReference type="ChEBI" id="CHEBI:16389"/>
    </ligand>
</feature>
<sequence>MTNTRKSHPLIKIVNHSFIDLPAPSNISAWWNFGSLLGVCLGLQILTGLFLAMHYTADTTTAFSSVTHICRDVNYGWLIRYMHANGASMFFIFLYFHIGRGIYYGSYTFMDTWNIGVLLLFAVMATAFMGYVLPWGQMSFWGATVITNLLSAIPYIGPTLVEWIWGGFSVDKATLTRFFAFHFILPFIITAMVMIHLLFLHETGSNNPSGMNSDSDKIPFHPYYTIKDILGILFMMITLMSLVMFTPDLLGDPDNYTPANPLNTPPHIKPEWYFLFAYAILRSIPNKLGGVLALVFSILILMLFPILHSSKQRSMSFRPLSQCLMWMLVANLLILTWIGGQPVEHPFITIGQLASVTYFFTILILMPSTALMENKLLKW</sequence>
<evidence type="ECO:0000250" key="1"/>
<evidence type="ECO:0000250" key="2">
    <source>
        <dbReference type="UniProtKB" id="P00157"/>
    </source>
</evidence>
<evidence type="ECO:0000255" key="3">
    <source>
        <dbReference type="PROSITE-ProRule" id="PRU00967"/>
    </source>
</evidence>
<evidence type="ECO:0000255" key="4">
    <source>
        <dbReference type="PROSITE-ProRule" id="PRU00968"/>
    </source>
</evidence>
<comment type="function">
    <text evidence="2">Component of the ubiquinol-cytochrome c reductase complex (complex III or cytochrome b-c1 complex) that is part of the mitochondrial respiratory chain. The b-c1 complex mediates electron transfer from ubiquinol to cytochrome c. Contributes to the generation of a proton gradient across the mitochondrial membrane that is then used for ATP synthesis.</text>
</comment>
<comment type="cofactor">
    <cofactor evidence="2">
        <name>heme b</name>
        <dbReference type="ChEBI" id="CHEBI:60344"/>
    </cofactor>
    <text evidence="2">Binds 2 heme b groups non-covalently.</text>
</comment>
<comment type="subunit">
    <text evidence="2">The cytochrome bc1 complex contains 11 subunits: 3 respiratory subunits (MT-CYB, CYC1 and UQCRFS1), 2 core proteins (UQCRC1 and UQCRC2) and 6 low-molecular weight proteins (UQCRH/QCR6, UQCRB/QCR7, UQCRQ/QCR8, UQCR10/QCR9, UQCR11/QCR10 and a cleavage product of UQCRFS1). This cytochrome bc1 complex then forms a dimer.</text>
</comment>
<comment type="subcellular location">
    <subcellularLocation>
        <location evidence="2">Mitochondrion inner membrane</location>
        <topology evidence="2">Multi-pass membrane protein</topology>
    </subcellularLocation>
</comment>
<comment type="miscellaneous">
    <text evidence="1">Heme 1 (or BL or b562) is low-potential and absorbs at about 562 nm, and heme 2 (or BH or b566) is high-potential and absorbs at about 566 nm.</text>
</comment>
<comment type="similarity">
    <text evidence="3 4">Belongs to the cytochrome b family.</text>
</comment>
<comment type="caution">
    <text evidence="2">The full-length protein contains only eight transmembrane helices, not nine as predicted by bioinformatics tools.</text>
</comment>
<dbReference type="EMBL" id="AF370696">
    <property type="protein sequence ID" value="AAL01860.1"/>
    <property type="molecule type" value="Genomic_DNA"/>
</dbReference>
<dbReference type="SMR" id="Q94WX5"/>
<dbReference type="GO" id="GO:0005743">
    <property type="term" value="C:mitochondrial inner membrane"/>
    <property type="evidence" value="ECO:0007669"/>
    <property type="project" value="UniProtKB-SubCell"/>
</dbReference>
<dbReference type="GO" id="GO:0045275">
    <property type="term" value="C:respiratory chain complex III"/>
    <property type="evidence" value="ECO:0007669"/>
    <property type="project" value="InterPro"/>
</dbReference>
<dbReference type="GO" id="GO:0046872">
    <property type="term" value="F:metal ion binding"/>
    <property type="evidence" value="ECO:0007669"/>
    <property type="project" value="UniProtKB-KW"/>
</dbReference>
<dbReference type="GO" id="GO:0008121">
    <property type="term" value="F:ubiquinol-cytochrome-c reductase activity"/>
    <property type="evidence" value="ECO:0007669"/>
    <property type="project" value="InterPro"/>
</dbReference>
<dbReference type="GO" id="GO:0006122">
    <property type="term" value="P:mitochondrial electron transport, ubiquinol to cytochrome c"/>
    <property type="evidence" value="ECO:0007669"/>
    <property type="project" value="TreeGrafter"/>
</dbReference>
<dbReference type="CDD" id="cd00290">
    <property type="entry name" value="cytochrome_b_C"/>
    <property type="match status" value="1"/>
</dbReference>
<dbReference type="CDD" id="cd00284">
    <property type="entry name" value="Cytochrome_b_N"/>
    <property type="match status" value="1"/>
</dbReference>
<dbReference type="FunFam" id="1.20.810.10:FF:000002">
    <property type="entry name" value="Cytochrome b"/>
    <property type="match status" value="1"/>
</dbReference>
<dbReference type="Gene3D" id="1.20.810.10">
    <property type="entry name" value="Cytochrome Bc1 Complex, Chain C"/>
    <property type="match status" value="1"/>
</dbReference>
<dbReference type="InterPro" id="IPR005798">
    <property type="entry name" value="Cyt_b/b6_C"/>
</dbReference>
<dbReference type="InterPro" id="IPR036150">
    <property type="entry name" value="Cyt_b/b6_C_sf"/>
</dbReference>
<dbReference type="InterPro" id="IPR005797">
    <property type="entry name" value="Cyt_b/b6_N"/>
</dbReference>
<dbReference type="InterPro" id="IPR027387">
    <property type="entry name" value="Cytb/b6-like_sf"/>
</dbReference>
<dbReference type="InterPro" id="IPR030689">
    <property type="entry name" value="Cytochrome_b"/>
</dbReference>
<dbReference type="InterPro" id="IPR048260">
    <property type="entry name" value="Cytochrome_b_C_euk/bac"/>
</dbReference>
<dbReference type="InterPro" id="IPR048259">
    <property type="entry name" value="Cytochrome_b_N_euk/bac"/>
</dbReference>
<dbReference type="InterPro" id="IPR016174">
    <property type="entry name" value="Di-haem_cyt_TM"/>
</dbReference>
<dbReference type="PANTHER" id="PTHR19271">
    <property type="entry name" value="CYTOCHROME B"/>
    <property type="match status" value="1"/>
</dbReference>
<dbReference type="PANTHER" id="PTHR19271:SF16">
    <property type="entry name" value="CYTOCHROME B"/>
    <property type="match status" value="1"/>
</dbReference>
<dbReference type="Pfam" id="PF00032">
    <property type="entry name" value="Cytochrom_B_C"/>
    <property type="match status" value="1"/>
</dbReference>
<dbReference type="Pfam" id="PF00033">
    <property type="entry name" value="Cytochrome_B"/>
    <property type="match status" value="1"/>
</dbReference>
<dbReference type="PIRSF" id="PIRSF038885">
    <property type="entry name" value="COB"/>
    <property type="match status" value="1"/>
</dbReference>
<dbReference type="SUPFAM" id="SSF81648">
    <property type="entry name" value="a domain/subunit of cytochrome bc1 complex (Ubiquinol-cytochrome c reductase)"/>
    <property type="match status" value="1"/>
</dbReference>
<dbReference type="SUPFAM" id="SSF81342">
    <property type="entry name" value="Transmembrane di-heme cytochromes"/>
    <property type="match status" value="1"/>
</dbReference>
<dbReference type="PROSITE" id="PS51003">
    <property type="entry name" value="CYTB_CTER"/>
    <property type="match status" value="1"/>
</dbReference>
<dbReference type="PROSITE" id="PS51002">
    <property type="entry name" value="CYTB_NTER"/>
    <property type="match status" value="1"/>
</dbReference>
<proteinExistence type="inferred from homology"/>
<geneLocation type="mitochondrion"/>
<gene>
    <name type="primary">MT-CYB</name>
    <name type="synonym">COB</name>
    <name type="synonym">CYTB</name>
    <name type="synonym">MTCYB</name>
</gene>
<reference key="1">
    <citation type="journal article" date="2001" name="Mol. Biol. Evol.">
        <title>Recurrent amplifications and deletions of satellite DNA accompanied chromosomal diversification in South American tuco-tucos (genus Ctenomys, Rodentia: Octodontidae): a phylogenetic approach.</title>
        <authorList>
            <person name="Slamovits C.H."/>
            <person name="Cook J.A."/>
            <person name="Lessa E.P."/>
            <person name="Rossi M.S."/>
        </authorList>
    </citation>
    <scope>NUCLEOTIDE SEQUENCE [GENOMIC DNA]</scope>
    <source>
        <strain>Isolate MSR33</strain>
    </source>
</reference>
<organism>
    <name type="scientific">Ctenomys mendocinus</name>
    <name type="common">Mendoza tuco-tuco</name>
    <dbReference type="NCBI Taxonomy" id="61874"/>
    <lineage>
        <taxon>Eukaryota</taxon>
        <taxon>Metazoa</taxon>
        <taxon>Chordata</taxon>
        <taxon>Craniata</taxon>
        <taxon>Vertebrata</taxon>
        <taxon>Euteleostomi</taxon>
        <taxon>Mammalia</taxon>
        <taxon>Eutheria</taxon>
        <taxon>Euarchontoglires</taxon>
        <taxon>Glires</taxon>
        <taxon>Rodentia</taxon>
        <taxon>Hystricomorpha</taxon>
        <taxon>Ctenomyidae</taxon>
        <taxon>Ctenomys</taxon>
    </lineage>
</organism>
<name>CYB_CTEME</name>
<keyword id="KW-0249">Electron transport</keyword>
<keyword id="KW-0349">Heme</keyword>
<keyword id="KW-0408">Iron</keyword>
<keyword id="KW-0472">Membrane</keyword>
<keyword id="KW-0479">Metal-binding</keyword>
<keyword id="KW-0496">Mitochondrion</keyword>
<keyword id="KW-0999">Mitochondrion inner membrane</keyword>
<keyword id="KW-0679">Respiratory chain</keyword>
<keyword id="KW-0812">Transmembrane</keyword>
<keyword id="KW-1133">Transmembrane helix</keyword>
<keyword id="KW-0813">Transport</keyword>
<keyword id="KW-0830">Ubiquinone</keyword>
<protein>
    <recommendedName>
        <fullName>Cytochrome b</fullName>
    </recommendedName>
    <alternativeName>
        <fullName>Complex III subunit 3</fullName>
    </alternativeName>
    <alternativeName>
        <fullName>Complex III subunit III</fullName>
    </alternativeName>
    <alternativeName>
        <fullName>Cytochrome b-c1 complex subunit 3</fullName>
    </alternativeName>
    <alternativeName>
        <fullName>Ubiquinol-cytochrome-c reductase complex cytochrome b subunit</fullName>
    </alternativeName>
</protein>